<evidence type="ECO:0000255" key="1">
    <source>
        <dbReference type="HAMAP-Rule" id="MF_00041"/>
    </source>
</evidence>
<reference key="1">
    <citation type="journal article" date="2002" name="DNA Res.">
        <title>Complete genomic sequence of nitrogen-fixing symbiotic bacterium Bradyrhizobium japonicum USDA110.</title>
        <authorList>
            <person name="Kaneko T."/>
            <person name="Nakamura Y."/>
            <person name="Sato S."/>
            <person name="Minamisawa K."/>
            <person name="Uchiumi T."/>
            <person name="Sasamoto S."/>
            <person name="Watanabe A."/>
            <person name="Idesawa K."/>
            <person name="Iriguchi M."/>
            <person name="Kawashima K."/>
            <person name="Kohara M."/>
            <person name="Matsumoto M."/>
            <person name="Shimpo S."/>
            <person name="Tsuruoka H."/>
            <person name="Wada T."/>
            <person name="Yamada M."/>
            <person name="Tabata S."/>
        </authorList>
    </citation>
    <scope>NUCLEOTIDE SEQUENCE [LARGE SCALE GENOMIC DNA]</scope>
    <source>
        <strain>JCM 10833 / BCRC 13528 / IAM 13628 / NBRC 14792 / USDA 110</strain>
    </source>
</reference>
<keyword id="KW-0030">Aminoacyl-tRNA synthetase</keyword>
<keyword id="KW-0067">ATP-binding</keyword>
<keyword id="KW-0963">Cytoplasm</keyword>
<keyword id="KW-0436">Ligase</keyword>
<keyword id="KW-0479">Metal-binding</keyword>
<keyword id="KW-0547">Nucleotide-binding</keyword>
<keyword id="KW-0648">Protein biosynthesis</keyword>
<keyword id="KW-1185">Reference proteome</keyword>
<keyword id="KW-0862">Zinc</keyword>
<comment type="catalytic activity">
    <reaction evidence="1">
        <text>tRNA(Cys) + L-cysteine + ATP = L-cysteinyl-tRNA(Cys) + AMP + diphosphate</text>
        <dbReference type="Rhea" id="RHEA:17773"/>
        <dbReference type="Rhea" id="RHEA-COMP:9661"/>
        <dbReference type="Rhea" id="RHEA-COMP:9679"/>
        <dbReference type="ChEBI" id="CHEBI:30616"/>
        <dbReference type="ChEBI" id="CHEBI:33019"/>
        <dbReference type="ChEBI" id="CHEBI:35235"/>
        <dbReference type="ChEBI" id="CHEBI:78442"/>
        <dbReference type="ChEBI" id="CHEBI:78517"/>
        <dbReference type="ChEBI" id="CHEBI:456215"/>
        <dbReference type="EC" id="6.1.1.16"/>
    </reaction>
</comment>
<comment type="cofactor">
    <cofactor evidence="1">
        <name>Zn(2+)</name>
        <dbReference type="ChEBI" id="CHEBI:29105"/>
    </cofactor>
    <text evidence="1">Binds 1 zinc ion per subunit.</text>
</comment>
<comment type="subunit">
    <text evidence="1">Monomer.</text>
</comment>
<comment type="subcellular location">
    <subcellularLocation>
        <location evidence="1">Cytoplasm</location>
    </subcellularLocation>
</comment>
<comment type="similarity">
    <text evidence="1">Belongs to the class-I aminoacyl-tRNA synthetase family.</text>
</comment>
<sequence length="460" mass="51454">MELRLYDTLTKEKRTFVPLDANNVRMYVCGPTVYDFAHIGNARPVIVFDVLFRLLRHLYGEAHVKYVRNITDVDDKINDRAARDFPGLPLNEAIREVTEQTGKQFHADVDALGALRPSVEPRATEHIGEMREIIERLVAGGFAYVAEDHVLFSPQAMNAANSTLPRYGALSNRSLDEMVAGARVDVAPYKKGSTDFVLWKPSKPGEPSWPSPAGIAAQGRPGWHIECSAMAWKHLGEYFDIHGGGIDLVFPHHENEVAQTCCAFHRERMANYWMHNGFLQVESEKMSKSLGNFITIHELLADWPGEVLRLNMLKTHYRSPIDWTMKSLEESAKTLDDWYRVAADVDPGRPAASVVEPLLDDLNTSLAIAALHGLRNSDVSALAGSLRLLGFLSESAAQWEDRKQKASGVDAGEVERLISERTAARGRKDFKESDRIRDQLAAMGVAIKDSKEGTTWEFSR</sequence>
<organism>
    <name type="scientific">Bradyrhizobium diazoefficiens (strain JCM 10833 / BCRC 13528 / IAM 13628 / NBRC 14792 / USDA 110)</name>
    <dbReference type="NCBI Taxonomy" id="224911"/>
    <lineage>
        <taxon>Bacteria</taxon>
        <taxon>Pseudomonadati</taxon>
        <taxon>Pseudomonadota</taxon>
        <taxon>Alphaproteobacteria</taxon>
        <taxon>Hyphomicrobiales</taxon>
        <taxon>Nitrobacteraceae</taxon>
        <taxon>Bradyrhizobium</taxon>
    </lineage>
</organism>
<feature type="chain" id="PRO_0000159363" description="Cysteine--tRNA ligase">
    <location>
        <begin position="1"/>
        <end position="460"/>
    </location>
</feature>
<feature type="short sequence motif" description="'HIGH' region">
    <location>
        <begin position="31"/>
        <end position="41"/>
    </location>
</feature>
<feature type="short sequence motif" description="'KMSKS' region">
    <location>
        <begin position="285"/>
        <end position="289"/>
    </location>
</feature>
<feature type="binding site" evidence="1">
    <location>
        <position position="29"/>
    </location>
    <ligand>
        <name>Zn(2+)</name>
        <dbReference type="ChEBI" id="CHEBI:29105"/>
    </ligand>
</feature>
<feature type="binding site" evidence="1">
    <location>
        <position position="227"/>
    </location>
    <ligand>
        <name>Zn(2+)</name>
        <dbReference type="ChEBI" id="CHEBI:29105"/>
    </ligand>
</feature>
<feature type="binding site" evidence="1">
    <location>
        <position position="252"/>
    </location>
    <ligand>
        <name>Zn(2+)</name>
        <dbReference type="ChEBI" id="CHEBI:29105"/>
    </ligand>
</feature>
<feature type="binding site" evidence="1">
    <location>
        <position position="256"/>
    </location>
    <ligand>
        <name>Zn(2+)</name>
        <dbReference type="ChEBI" id="CHEBI:29105"/>
    </ligand>
</feature>
<feature type="binding site" evidence="1">
    <location>
        <position position="288"/>
    </location>
    <ligand>
        <name>ATP</name>
        <dbReference type="ChEBI" id="CHEBI:30616"/>
    </ligand>
</feature>
<dbReference type="EC" id="6.1.1.16" evidence="1"/>
<dbReference type="EMBL" id="BA000040">
    <property type="protein sequence ID" value="BAC49055.1"/>
    <property type="molecule type" value="Genomic_DNA"/>
</dbReference>
<dbReference type="RefSeq" id="NP_770430.1">
    <property type="nucleotide sequence ID" value="NC_004463.1"/>
</dbReference>
<dbReference type="RefSeq" id="WP_011086571.1">
    <property type="nucleotide sequence ID" value="NC_004463.1"/>
</dbReference>
<dbReference type="SMR" id="Q89NP8"/>
<dbReference type="FunCoup" id="Q89NP8">
    <property type="interactions" value="651"/>
</dbReference>
<dbReference type="STRING" id="224911.AAV28_15930"/>
<dbReference type="EnsemblBacteria" id="BAC49055">
    <property type="protein sequence ID" value="BAC49055"/>
    <property type="gene ID" value="BAC49055"/>
</dbReference>
<dbReference type="GeneID" id="46490795"/>
<dbReference type="KEGG" id="bja:blr3790"/>
<dbReference type="PATRIC" id="fig|224911.44.peg.3458"/>
<dbReference type="eggNOG" id="COG0215">
    <property type="taxonomic scope" value="Bacteria"/>
</dbReference>
<dbReference type="HOGENOM" id="CLU_013528_0_1_5"/>
<dbReference type="InParanoid" id="Q89NP8"/>
<dbReference type="OrthoDB" id="9815130at2"/>
<dbReference type="PhylomeDB" id="Q89NP8"/>
<dbReference type="Proteomes" id="UP000002526">
    <property type="component" value="Chromosome"/>
</dbReference>
<dbReference type="GO" id="GO:0005737">
    <property type="term" value="C:cytoplasm"/>
    <property type="evidence" value="ECO:0000318"/>
    <property type="project" value="GO_Central"/>
</dbReference>
<dbReference type="GO" id="GO:0005829">
    <property type="term" value="C:cytosol"/>
    <property type="evidence" value="ECO:0000318"/>
    <property type="project" value="GO_Central"/>
</dbReference>
<dbReference type="GO" id="GO:0005524">
    <property type="term" value="F:ATP binding"/>
    <property type="evidence" value="ECO:0000318"/>
    <property type="project" value="GO_Central"/>
</dbReference>
<dbReference type="GO" id="GO:0004817">
    <property type="term" value="F:cysteine-tRNA ligase activity"/>
    <property type="evidence" value="ECO:0000318"/>
    <property type="project" value="GO_Central"/>
</dbReference>
<dbReference type="GO" id="GO:0008270">
    <property type="term" value="F:zinc ion binding"/>
    <property type="evidence" value="ECO:0007669"/>
    <property type="project" value="UniProtKB-UniRule"/>
</dbReference>
<dbReference type="GO" id="GO:0006423">
    <property type="term" value="P:cysteinyl-tRNA aminoacylation"/>
    <property type="evidence" value="ECO:0000318"/>
    <property type="project" value="GO_Central"/>
</dbReference>
<dbReference type="CDD" id="cd00672">
    <property type="entry name" value="CysRS_core"/>
    <property type="match status" value="1"/>
</dbReference>
<dbReference type="FunFam" id="1.20.120.1910:FF:000023">
    <property type="entry name" value="Cysteine--tRNA ligase"/>
    <property type="match status" value="1"/>
</dbReference>
<dbReference type="FunFam" id="3.40.50.620:FF:000068">
    <property type="entry name" value="Cysteine--tRNA ligase"/>
    <property type="match status" value="1"/>
</dbReference>
<dbReference type="Gene3D" id="1.20.120.1910">
    <property type="entry name" value="Cysteine-tRNA ligase, C-terminal anti-codon recognition domain"/>
    <property type="match status" value="1"/>
</dbReference>
<dbReference type="Gene3D" id="3.40.50.620">
    <property type="entry name" value="HUPs"/>
    <property type="match status" value="1"/>
</dbReference>
<dbReference type="HAMAP" id="MF_00041">
    <property type="entry name" value="Cys_tRNA_synth"/>
    <property type="match status" value="1"/>
</dbReference>
<dbReference type="InterPro" id="IPR015803">
    <property type="entry name" value="Cys-tRNA-ligase"/>
</dbReference>
<dbReference type="InterPro" id="IPR024909">
    <property type="entry name" value="Cys-tRNA/MSH_ligase"/>
</dbReference>
<dbReference type="InterPro" id="IPR056411">
    <property type="entry name" value="CysS_C"/>
</dbReference>
<dbReference type="InterPro" id="IPR014729">
    <property type="entry name" value="Rossmann-like_a/b/a_fold"/>
</dbReference>
<dbReference type="InterPro" id="IPR032678">
    <property type="entry name" value="tRNA-synt_1_cat_dom"/>
</dbReference>
<dbReference type="InterPro" id="IPR009080">
    <property type="entry name" value="tRNAsynth_Ia_anticodon-bd"/>
</dbReference>
<dbReference type="NCBIfam" id="TIGR00435">
    <property type="entry name" value="cysS"/>
    <property type="match status" value="1"/>
</dbReference>
<dbReference type="PANTHER" id="PTHR10890:SF3">
    <property type="entry name" value="CYSTEINE--TRNA LIGASE, CYTOPLASMIC"/>
    <property type="match status" value="1"/>
</dbReference>
<dbReference type="PANTHER" id="PTHR10890">
    <property type="entry name" value="CYSTEINYL-TRNA SYNTHETASE"/>
    <property type="match status" value="1"/>
</dbReference>
<dbReference type="Pfam" id="PF23493">
    <property type="entry name" value="CysS_C"/>
    <property type="match status" value="1"/>
</dbReference>
<dbReference type="Pfam" id="PF01406">
    <property type="entry name" value="tRNA-synt_1e"/>
    <property type="match status" value="1"/>
</dbReference>
<dbReference type="PRINTS" id="PR00983">
    <property type="entry name" value="TRNASYNTHCYS"/>
</dbReference>
<dbReference type="SUPFAM" id="SSF47323">
    <property type="entry name" value="Anticodon-binding domain of a subclass of class I aminoacyl-tRNA synthetases"/>
    <property type="match status" value="1"/>
</dbReference>
<dbReference type="SUPFAM" id="SSF52374">
    <property type="entry name" value="Nucleotidylyl transferase"/>
    <property type="match status" value="1"/>
</dbReference>
<gene>
    <name evidence="1" type="primary">cysS</name>
    <name type="ordered locus">blr3790</name>
</gene>
<name>SYC_BRADU</name>
<protein>
    <recommendedName>
        <fullName evidence="1">Cysteine--tRNA ligase</fullName>
        <ecNumber evidence="1">6.1.1.16</ecNumber>
    </recommendedName>
    <alternativeName>
        <fullName evidence="1">Cysteinyl-tRNA synthetase</fullName>
        <shortName evidence="1">CysRS</shortName>
    </alternativeName>
</protein>
<accession>Q89NP8</accession>
<proteinExistence type="inferred from homology"/>